<dbReference type="EMBL" id="CP001614">
    <property type="protein sequence ID" value="ACR13902.1"/>
    <property type="molecule type" value="Genomic_DNA"/>
</dbReference>
<dbReference type="RefSeq" id="WP_015820017.1">
    <property type="nucleotide sequence ID" value="NC_012997.1"/>
</dbReference>
<dbReference type="SMR" id="C5BQ69"/>
<dbReference type="STRING" id="377629.TERTU_0916"/>
<dbReference type="GeneID" id="58408690"/>
<dbReference type="GeneID" id="93857735"/>
<dbReference type="KEGG" id="ttu:TERTU_0916"/>
<dbReference type="eggNOG" id="COG0255">
    <property type="taxonomic scope" value="Bacteria"/>
</dbReference>
<dbReference type="HOGENOM" id="CLU_158491_1_2_6"/>
<dbReference type="OrthoDB" id="9815192at2"/>
<dbReference type="Proteomes" id="UP000009080">
    <property type="component" value="Chromosome"/>
</dbReference>
<dbReference type="GO" id="GO:0022625">
    <property type="term" value="C:cytosolic large ribosomal subunit"/>
    <property type="evidence" value="ECO:0007669"/>
    <property type="project" value="TreeGrafter"/>
</dbReference>
<dbReference type="GO" id="GO:0003735">
    <property type="term" value="F:structural constituent of ribosome"/>
    <property type="evidence" value="ECO:0007669"/>
    <property type="project" value="InterPro"/>
</dbReference>
<dbReference type="GO" id="GO:0006412">
    <property type="term" value="P:translation"/>
    <property type="evidence" value="ECO:0007669"/>
    <property type="project" value="UniProtKB-UniRule"/>
</dbReference>
<dbReference type="CDD" id="cd00427">
    <property type="entry name" value="Ribosomal_L29_HIP"/>
    <property type="match status" value="1"/>
</dbReference>
<dbReference type="FunFam" id="1.10.287.310:FF:000001">
    <property type="entry name" value="50S ribosomal protein L29"/>
    <property type="match status" value="1"/>
</dbReference>
<dbReference type="Gene3D" id="1.10.287.310">
    <property type="match status" value="1"/>
</dbReference>
<dbReference type="HAMAP" id="MF_00374">
    <property type="entry name" value="Ribosomal_uL29"/>
    <property type="match status" value="1"/>
</dbReference>
<dbReference type="InterPro" id="IPR050063">
    <property type="entry name" value="Ribosomal_protein_uL29"/>
</dbReference>
<dbReference type="InterPro" id="IPR001854">
    <property type="entry name" value="Ribosomal_uL29"/>
</dbReference>
<dbReference type="InterPro" id="IPR018254">
    <property type="entry name" value="Ribosomal_uL29_CS"/>
</dbReference>
<dbReference type="InterPro" id="IPR036049">
    <property type="entry name" value="Ribosomal_uL29_sf"/>
</dbReference>
<dbReference type="NCBIfam" id="TIGR00012">
    <property type="entry name" value="L29"/>
    <property type="match status" value="1"/>
</dbReference>
<dbReference type="PANTHER" id="PTHR10916">
    <property type="entry name" value="60S RIBOSOMAL PROTEIN L35/50S RIBOSOMAL PROTEIN L29"/>
    <property type="match status" value="1"/>
</dbReference>
<dbReference type="PANTHER" id="PTHR10916:SF0">
    <property type="entry name" value="LARGE RIBOSOMAL SUBUNIT PROTEIN UL29C"/>
    <property type="match status" value="1"/>
</dbReference>
<dbReference type="Pfam" id="PF00831">
    <property type="entry name" value="Ribosomal_L29"/>
    <property type="match status" value="1"/>
</dbReference>
<dbReference type="SUPFAM" id="SSF46561">
    <property type="entry name" value="Ribosomal protein L29 (L29p)"/>
    <property type="match status" value="1"/>
</dbReference>
<dbReference type="PROSITE" id="PS00579">
    <property type="entry name" value="RIBOSOMAL_L29"/>
    <property type="match status" value="1"/>
</dbReference>
<sequence length="64" mass="7451">MKASELNEKSVDELKQELLTQLEAQFKLRMQKSTGQLNQTHLVKQTRRDIARIKTVLRQKAATK</sequence>
<comment type="similarity">
    <text evidence="1">Belongs to the universal ribosomal protein uL29 family.</text>
</comment>
<proteinExistence type="inferred from homology"/>
<organism>
    <name type="scientific">Teredinibacter turnerae (strain ATCC 39867 / T7901)</name>
    <dbReference type="NCBI Taxonomy" id="377629"/>
    <lineage>
        <taxon>Bacteria</taxon>
        <taxon>Pseudomonadati</taxon>
        <taxon>Pseudomonadota</taxon>
        <taxon>Gammaproteobacteria</taxon>
        <taxon>Cellvibrionales</taxon>
        <taxon>Cellvibrionaceae</taxon>
        <taxon>Teredinibacter</taxon>
    </lineage>
</organism>
<protein>
    <recommendedName>
        <fullName evidence="1">Large ribosomal subunit protein uL29</fullName>
    </recommendedName>
    <alternativeName>
        <fullName evidence="2">50S ribosomal protein L29</fullName>
    </alternativeName>
</protein>
<feature type="chain" id="PRO_1000205639" description="Large ribosomal subunit protein uL29">
    <location>
        <begin position="1"/>
        <end position="64"/>
    </location>
</feature>
<accession>C5BQ69</accession>
<gene>
    <name evidence="1" type="primary">rpmC</name>
    <name type="ordered locus">TERTU_0916</name>
</gene>
<name>RL29_TERTT</name>
<evidence type="ECO:0000255" key="1">
    <source>
        <dbReference type="HAMAP-Rule" id="MF_00374"/>
    </source>
</evidence>
<evidence type="ECO:0000305" key="2"/>
<keyword id="KW-1185">Reference proteome</keyword>
<keyword id="KW-0687">Ribonucleoprotein</keyword>
<keyword id="KW-0689">Ribosomal protein</keyword>
<reference key="1">
    <citation type="journal article" date="2009" name="PLoS ONE">
        <title>The complete genome of Teredinibacter turnerae T7901: an intracellular endosymbiont of marine wood-boring bivalves (shipworms).</title>
        <authorList>
            <person name="Yang J.C."/>
            <person name="Madupu R."/>
            <person name="Durkin A.S."/>
            <person name="Ekborg N.A."/>
            <person name="Pedamallu C.S."/>
            <person name="Hostetler J.B."/>
            <person name="Radune D."/>
            <person name="Toms B.S."/>
            <person name="Henrissat B."/>
            <person name="Coutinho P.M."/>
            <person name="Schwarz S."/>
            <person name="Field L."/>
            <person name="Trindade-Silva A.E."/>
            <person name="Soares C.A.G."/>
            <person name="Elshahawi S."/>
            <person name="Hanora A."/>
            <person name="Schmidt E.W."/>
            <person name="Haygood M.G."/>
            <person name="Posfai J."/>
            <person name="Benner J."/>
            <person name="Madinger C."/>
            <person name="Nove J."/>
            <person name="Anton B."/>
            <person name="Chaudhary K."/>
            <person name="Foster J."/>
            <person name="Holman A."/>
            <person name="Kumar S."/>
            <person name="Lessard P.A."/>
            <person name="Luyten Y.A."/>
            <person name="Slatko B."/>
            <person name="Wood N."/>
            <person name="Wu B."/>
            <person name="Teplitski M."/>
            <person name="Mougous J.D."/>
            <person name="Ward N."/>
            <person name="Eisen J.A."/>
            <person name="Badger J.H."/>
            <person name="Distel D.L."/>
        </authorList>
    </citation>
    <scope>NUCLEOTIDE SEQUENCE [LARGE SCALE GENOMIC DNA]</scope>
    <source>
        <strain>ATCC 39867 / T7901</strain>
    </source>
</reference>